<comment type="function">
    <text evidence="2">Cilium- and flagellum-specific protein that plays a role in axonemal structure organization and motility. Plays a role in outer and inner axonemal dynein arm assembly.</text>
</comment>
<comment type="subcellular location">
    <subcellularLocation>
        <location evidence="2">Cytoplasm</location>
    </subcellularLocation>
    <subcellularLocation>
        <location evidence="2">Cytoplasm</location>
        <location evidence="2">Cytoskeleton</location>
        <location evidence="2">Cilium axoneme</location>
    </subcellularLocation>
    <text evidence="2">Localizes predominantly in the cytoplasm and weakly in cilia. Transported within cilia in an intraflagellar transport (IFT)-dependent manner. Accumulates at the ciliary tips during ciliogenesis.</text>
</comment>
<comment type="disruption phenotype">
    <text evidence="2">RNAi-mediated knockdown of the protein causes reduced swimming motility and velocity. Display a reduction in the cilia beating frequency and an altered cilia waveform. Show absence of the outer and inner dynein arms.</text>
</comment>
<comment type="similarity">
    <text evidence="3">Belongs to the CFAP300 family.</text>
</comment>
<sequence>MQIESDNQVTNQSYSFFRQENTILDDKKFMEILQKWGLQHSIKVSTFLFDIKFDHLNPNQFLLDLFNSKDVRGSLHYVSFKQNVLLSQIKFQPLTCKSIKLDLFDKLTEDKIVVKGHIKQCFEEQFENIQIADELRKALVLEDSEQYCVFNEADRQELLFKLFQILVLGGQLCQYEDEIQAYLDWTKYLYKNTVNARKYADKDEIYIDSYAYDIRKLENSYSSDHPQNVMYVVVNPSLRIVNIIENQWLKVW</sequence>
<organism>
    <name type="scientific">Paramecium tetraurelia</name>
    <dbReference type="NCBI Taxonomy" id="5888"/>
    <lineage>
        <taxon>Eukaryota</taxon>
        <taxon>Sar</taxon>
        <taxon>Alveolata</taxon>
        <taxon>Ciliophora</taxon>
        <taxon>Intramacronucleata</taxon>
        <taxon>Oligohymenophorea</taxon>
        <taxon>Peniculida</taxon>
        <taxon>Parameciidae</taxon>
        <taxon>Paramecium</taxon>
    </lineage>
</organism>
<dbReference type="EMBL" id="CT868208">
    <property type="protein sequence ID" value="CAK75718.1"/>
    <property type="molecule type" value="Genomic_DNA"/>
</dbReference>
<dbReference type="RefSeq" id="XP_001443115.1">
    <property type="nucleotide sequence ID" value="XM_001443078.1"/>
</dbReference>
<dbReference type="STRING" id="5888.A0CY51"/>
<dbReference type="EnsemblProtists" id="CAK75718">
    <property type="protein sequence ID" value="CAK75718"/>
    <property type="gene ID" value="GSPATT00011350001"/>
</dbReference>
<dbReference type="GeneID" id="5028900"/>
<dbReference type="KEGG" id="ptm:GSPATT00011350001"/>
<dbReference type="eggNOG" id="ENOG502QUFH">
    <property type="taxonomic scope" value="Eukaryota"/>
</dbReference>
<dbReference type="HOGENOM" id="CLU_068703_0_0_1"/>
<dbReference type="InParanoid" id="A0CY51"/>
<dbReference type="OMA" id="FYHCYGV"/>
<dbReference type="OrthoDB" id="10259249at2759"/>
<dbReference type="Proteomes" id="UP000000600">
    <property type="component" value="Partially assembled WGS sequence"/>
</dbReference>
<dbReference type="GO" id="GO:0005737">
    <property type="term" value="C:cytoplasm"/>
    <property type="evidence" value="ECO:0000314"/>
    <property type="project" value="UniProtKB"/>
</dbReference>
<dbReference type="GO" id="GO:0005856">
    <property type="term" value="C:cytoskeleton"/>
    <property type="evidence" value="ECO:0007669"/>
    <property type="project" value="UniProtKB-KW"/>
</dbReference>
<dbReference type="GO" id="GO:0031514">
    <property type="term" value="C:motile cilium"/>
    <property type="evidence" value="ECO:0000314"/>
    <property type="project" value="UniProtKB"/>
</dbReference>
<dbReference type="GO" id="GO:0036159">
    <property type="term" value="P:inner dynein arm assembly"/>
    <property type="evidence" value="ECO:0000315"/>
    <property type="project" value="UniProtKB"/>
</dbReference>
<dbReference type="GO" id="GO:0036158">
    <property type="term" value="P:outer dynein arm assembly"/>
    <property type="evidence" value="ECO:0000315"/>
    <property type="project" value="UniProtKB"/>
</dbReference>
<dbReference type="GO" id="GO:0120030">
    <property type="term" value="P:positive regulation of cilium beat frequency involved in ciliary motility"/>
    <property type="evidence" value="ECO:0000315"/>
    <property type="project" value="UniProtKB"/>
</dbReference>
<dbReference type="InterPro" id="IPR029416">
    <property type="entry name" value="CFAP300"/>
</dbReference>
<dbReference type="PANTHER" id="PTHR31078">
    <property type="entry name" value="CILIA- AND FLAGELLA-ASSOCIATED PROTEIN 300"/>
    <property type="match status" value="1"/>
</dbReference>
<dbReference type="PANTHER" id="PTHR31078:SF1">
    <property type="entry name" value="CILIA- AND FLAGELLA-ASSOCIATED PROTEIN 300"/>
    <property type="match status" value="1"/>
</dbReference>
<dbReference type="Pfam" id="PF14926">
    <property type="entry name" value="CFAP300"/>
    <property type="match status" value="1"/>
</dbReference>
<accession>A0CY51</accession>
<protein>
    <recommendedName>
        <fullName evidence="3">Cilia- and flagella-associated protein 300</fullName>
    </recommendedName>
</protein>
<keyword id="KW-0966">Cell projection</keyword>
<keyword id="KW-0963">Cytoplasm</keyword>
<keyword id="KW-0206">Cytoskeleton</keyword>
<keyword id="KW-1185">Reference proteome</keyword>
<reference key="1">
    <citation type="journal article" date="2006" name="Nature">
        <title>Global trends of whole-genome duplications revealed by the ciliate Paramecium tetraurelia.</title>
        <authorList>
            <person name="Aury J.-M."/>
            <person name="Jaillon O."/>
            <person name="Duret L."/>
            <person name="Noel B."/>
            <person name="Jubin C."/>
            <person name="Porcel B.M."/>
            <person name="Segurens B."/>
            <person name="Daubin V."/>
            <person name="Anthouard V."/>
            <person name="Aiach N."/>
            <person name="Arnaiz O."/>
            <person name="Billaut A."/>
            <person name="Beisson J."/>
            <person name="Blanc I."/>
            <person name="Bouhouche K."/>
            <person name="Camara F."/>
            <person name="Duharcourt S."/>
            <person name="Guigo R."/>
            <person name="Gogendeau D."/>
            <person name="Katinka M."/>
            <person name="Keller A.-M."/>
            <person name="Kissmehl R."/>
            <person name="Klotz C."/>
            <person name="Koll F."/>
            <person name="Le Mouel A."/>
            <person name="Lepere G."/>
            <person name="Malinsky S."/>
            <person name="Nowacki M."/>
            <person name="Nowak J.K."/>
            <person name="Plattner H."/>
            <person name="Poulain J."/>
            <person name="Ruiz F."/>
            <person name="Serrano V."/>
            <person name="Zagulski M."/>
            <person name="Dessen P."/>
            <person name="Betermier M."/>
            <person name="Weissenbach J."/>
            <person name="Scarpelli C."/>
            <person name="Schaechter V."/>
            <person name="Sperling L."/>
            <person name="Meyer E."/>
            <person name="Cohen J."/>
            <person name="Wincker P."/>
        </authorList>
    </citation>
    <scope>NUCLEOTIDE SEQUENCE [LARGE SCALE GENOMIC DNA]</scope>
    <source>
        <strain>Stock d4-2</strain>
    </source>
</reference>
<reference key="2">
    <citation type="journal article" date="2018" name="Am. J. Hum. Genet.">
        <title>C11orf70 mutations disrupting the intraflagellar transport-dependent assembly of multiple axonemal dyneins cause primary ciliary dyskinesia.</title>
        <authorList>
            <person name="Fassad M.R."/>
            <person name="Shoemark A."/>
            <person name="le Borgne P."/>
            <person name="Koll F."/>
            <person name="Patel M."/>
            <person name="Dixon M."/>
            <person name="Hayward J."/>
            <person name="Richardson C."/>
            <person name="Frost E."/>
            <person name="Jenkins L."/>
            <person name="Cullup T."/>
            <person name="Chung E.M.K."/>
            <person name="Lemullois M."/>
            <person name="Aubusson-Fleury A."/>
            <person name="Hogg C."/>
            <person name="Mitchell D.R."/>
            <person name="Tassin A.M."/>
            <person name="Mitchison H.M."/>
        </authorList>
    </citation>
    <scope>FUNCTION</scope>
    <scope>SUBCELLULAR LOCATION</scope>
    <scope>INDUCTION</scope>
    <scope>DISRUPTION PHENOTYPE</scope>
</reference>
<evidence type="ECO:0000250" key="1">
    <source>
        <dbReference type="UniProtKB" id="Q9BRQ4"/>
    </source>
</evidence>
<evidence type="ECO:0000269" key="2">
    <source>
    </source>
</evidence>
<evidence type="ECO:0000305" key="3"/>
<proteinExistence type="evidence at transcript level"/>
<gene>
    <name evidence="1" type="primary">CFAP300</name>
    <name type="ORF">GSPATT00011350001</name>
</gene>
<feature type="chain" id="PRO_0000444629" description="Cilia- and flagella-associated protein 300">
    <location>
        <begin position="1"/>
        <end position="252"/>
    </location>
</feature>
<name>CF300_PARTE</name>